<evidence type="ECO:0000255" key="1">
    <source>
        <dbReference type="HAMAP-Rule" id="MF_01253"/>
    </source>
</evidence>
<keyword id="KW-0227">DNA damage</keyword>
<keyword id="KW-0234">DNA repair</keyword>
<keyword id="KW-0238">DNA-binding</keyword>
<keyword id="KW-0326">Glycosidase</keyword>
<keyword id="KW-0378">Hydrolase</keyword>
<keyword id="KW-0456">Lyase</keyword>
<keyword id="KW-0479">Metal-binding</keyword>
<keyword id="KW-0511">Multifunctional enzyme</keyword>
<keyword id="KW-0862">Zinc</keyword>
<keyword id="KW-0863">Zinc-finger</keyword>
<reference key="1">
    <citation type="journal article" date="2005" name="Nucleic Acids Res.">
        <title>Genome dynamics and diversity of Shigella species, the etiologic agents of bacillary dysentery.</title>
        <authorList>
            <person name="Yang F."/>
            <person name="Yang J."/>
            <person name="Zhang X."/>
            <person name="Chen L."/>
            <person name="Jiang Y."/>
            <person name="Yan Y."/>
            <person name="Tang X."/>
            <person name="Wang J."/>
            <person name="Xiong Z."/>
            <person name="Dong J."/>
            <person name="Xue Y."/>
            <person name="Zhu Y."/>
            <person name="Xu X."/>
            <person name="Sun L."/>
            <person name="Chen S."/>
            <person name="Nie H."/>
            <person name="Peng J."/>
            <person name="Xu J."/>
            <person name="Wang Y."/>
            <person name="Yuan Z."/>
            <person name="Wen Y."/>
            <person name="Yao Z."/>
            <person name="Shen Y."/>
            <person name="Qiang B."/>
            <person name="Hou Y."/>
            <person name="Yu J."/>
            <person name="Jin Q."/>
        </authorList>
    </citation>
    <scope>NUCLEOTIDE SEQUENCE [LARGE SCALE GENOMIC DNA]</scope>
    <source>
        <strain>Sb227</strain>
    </source>
</reference>
<organism>
    <name type="scientific">Shigella boydii serotype 4 (strain Sb227)</name>
    <dbReference type="NCBI Taxonomy" id="300268"/>
    <lineage>
        <taxon>Bacteria</taxon>
        <taxon>Pseudomonadati</taxon>
        <taxon>Pseudomonadota</taxon>
        <taxon>Gammaproteobacteria</taxon>
        <taxon>Enterobacterales</taxon>
        <taxon>Enterobacteriaceae</taxon>
        <taxon>Shigella</taxon>
    </lineage>
</organism>
<dbReference type="EC" id="3.2.2.-" evidence="1"/>
<dbReference type="EC" id="4.2.99.18" evidence="1"/>
<dbReference type="EMBL" id="CP000036">
    <property type="protein sequence ID" value="ABB65262.1"/>
    <property type="molecule type" value="Genomic_DNA"/>
</dbReference>
<dbReference type="RefSeq" id="WP_001114039.1">
    <property type="nucleotide sequence ID" value="NC_007613.1"/>
</dbReference>
<dbReference type="SMR" id="Q324J6"/>
<dbReference type="KEGG" id="sbo:SBO_0573"/>
<dbReference type="HOGENOM" id="CLU_038423_2_2_6"/>
<dbReference type="Proteomes" id="UP000007067">
    <property type="component" value="Chromosome"/>
</dbReference>
<dbReference type="GO" id="GO:0140078">
    <property type="term" value="F:class I DNA-(apurinic or apyrimidinic site) endonuclease activity"/>
    <property type="evidence" value="ECO:0007669"/>
    <property type="project" value="UniProtKB-EC"/>
</dbReference>
<dbReference type="GO" id="GO:0003684">
    <property type="term" value="F:damaged DNA binding"/>
    <property type="evidence" value="ECO:0007669"/>
    <property type="project" value="InterPro"/>
</dbReference>
<dbReference type="GO" id="GO:0000703">
    <property type="term" value="F:oxidized pyrimidine nucleobase lesion DNA N-glycosylase activity"/>
    <property type="evidence" value="ECO:0007669"/>
    <property type="project" value="UniProtKB-UniRule"/>
</dbReference>
<dbReference type="GO" id="GO:0008270">
    <property type="term" value="F:zinc ion binding"/>
    <property type="evidence" value="ECO:0007669"/>
    <property type="project" value="UniProtKB-UniRule"/>
</dbReference>
<dbReference type="GO" id="GO:0006284">
    <property type="term" value="P:base-excision repair"/>
    <property type="evidence" value="ECO:0007669"/>
    <property type="project" value="InterPro"/>
</dbReference>
<dbReference type="CDD" id="cd08965">
    <property type="entry name" value="EcNei-like_N"/>
    <property type="match status" value="1"/>
</dbReference>
<dbReference type="FunFam" id="1.10.8.50:FF:000005">
    <property type="entry name" value="Endonuclease 8"/>
    <property type="match status" value="1"/>
</dbReference>
<dbReference type="FunFam" id="3.20.190.10:FF:000002">
    <property type="entry name" value="Endonuclease 8"/>
    <property type="match status" value="1"/>
</dbReference>
<dbReference type="Gene3D" id="1.10.8.50">
    <property type="match status" value="1"/>
</dbReference>
<dbReference type="Gene3D" id="3.20.190.10">
    <property type="entry name" value="MutM-like, N-terminal"/>
    <property type="match status" value="1"/>
</dbReference>
<dbReference type="HAMAP" id="MF_01253">
    <property type="entry name" value="Endonuclease_8"/>
    <property type="match status" value="1"/>
</dbReference>
<dbReference type="InterPro" id="IPR015886">
    <property type="entry name" value="DNA_glyclase/AP_lyase_DNA-bd"/>
</dbReference>
<dbReference type="InterPro" id="IPR015887">
    <property type="entry name" value="DNA_glyclase_Znf_dom_DNA_BS"/>
</dbReference>
<dbReference type="InterPro" id="IPR044091">
    <property type="entry name" value="EcNei-like_N"/>
</dbReference>
<dbReference type="InterPro" id="IPR023713">
    <property type="entry name" value="Endonuclease-VIII"/>
</dbReference>
<dbReference type="InterPro" id="IPR012319">
    <property type="entry name" value="FPG_cat"/>
</dbReference>
<dbReference type="InterPro" id="IPR035937">
    <property type="entry name" value="MutM-like_N-ter"/>
</dbReference>
<dbReference type="InterPro" id="IPR010979">
    <property type="entry name" value="Ribosomal_uS13-like_H2TH"/>
</dbReference>
<dbReference type="InterPro" id="IPR000214">
    <property type="entry name" value="Znf_DNA_glyclase/AP_lyase"/>
</dbReference>
<dbReference type="InterPro" id="IPR010663">
    <property type="entry name" value="Znf_FPG/IleRS"/>
</dbReference>
<dbReference type="NCBIfam" id="NF007763">
    <property type="entry name" value="PRK10445.1"/>
    <property type="match status" value="1"/>
</dbReference>
<dbReference type="PANTHER" id="PTHR42697">
    <property type="entry name" value="ENDONUCLEASE 8"/>
    <property type="match status" value="1"/>
</dbReference>
<dbReference type="PANTHER" id="PTHR42697:SF1">
    <property type="entry name" value="ENDONUCLEASE 8"/>
    <property type="match status" value="1"/>
</dbReference>
<dbReference type="Pfam" id="PF01149">
    <property type="entry name" value="Fapy_DNA_glyco"/>
    <property type="match status" value="1"/>
</dbReference>
<dbReference type="Pfam" id="PF06831">
    <property type="entry name" value="H2TH"/>
    <property type="match status" value="1"/>
</dbReference>
<dbReference type="Pfam" id="PF06827">
    <property type="entry name" value="zf-FPG_IleRS"/>
    <property type="match status" value="1"/>
</dbReference>
<dbReference type="SMART" id="SM00898">
    <property type="entry name" value="Fapy_DNA_glyco"/>
    <property type="match status" value="1"/>
</dbReference>
<dbReference type="SMART" id="SM01232">
    <property type="entry name" value="H2TH"/>
    <property type="match status" value="1"/>
</dbReference>
<dbReference type="SUPFAM" id="SSF57716">
    <property type="entry name" value="Glucocorticoid receptor-like (DNA-binding domain)"/>
    <property type="match status" value="1"/>
</dbReference>
<dbReference type="SUPFAM" id="SSF81624">
    <property type="entry name" value="N-terminal domain of MutM-like DNA repair proteins"/>
    <property type="match status" value="1"/>
</dbReference>
<dbReference type="SUPFAM" id="SSF46946">
    <property type="entry name" value="S13-like H2TH domain"/>
    <property type="match status" value="1"/>
</dbReference>
<dbReference type="PROSITE" id="PS51068">
    <property type="entry name" value="FPG_CAT"/>
    <property type="match status" value="1"/>
</dbReference>
<dbReference type="PROSITE" id="PS01242">
    <property type="entry name" value="ZF_FPG_1"/>
    <property type="match status" value="1"/>
</dbReference>
<dbReference type="PROSITE" id="PS51066">
    <property type="entry name" value="ZF_FPG_2"/>
    <property type="match status" value="1"/>
</dbReference>
<name>END8_SHIBS</name>
<comment type="function">
    <text evidence="1">Involved in base excision repair of DNA damaged by oxidation or by mutagenic agents. Acts as a DNA glycosylase that recognizes and removes damaged bases. Has a preference for oxidized pyrimidines, such as thymine glycol, 5,6-dihydrouracil and 5,6-dihydrothymine. Has AP (apurinic/apyrimidinic) lyase activity and introduces nicks in the DNA strand. Cleaves the DNA backbone by beta-delta elimination to generate a single-strand break at the site of the removed base with both 3'- and 5'-phosphates.</text>
</comment>
<comment type="catalytic activity">
    <reaction evidence="1">
        <text>2'-deoxyribonucleotide-(2'-deoxyribose 5'-phosphate)-2'-deoxyribonucleotide-DNA = a 3'-end 2'-deoxyribonucleotide-(2,3-dehydro-2,3-deoxyribose 5'-phosphate)-DNA + a 5'-end 5'-phospho-2'-deoxyribonucleoside-DNA + H(+)</text>
        <dbReference type="Rhea" id="RHEA:66592"/>
        <dbReference type="Rhea" id="RHEA-COMP:13180"/>
        <dbReference type="Rhea" id="RHEA-COMP:16897"/>
        <dbReference type="Rhea" id="RHEA-COMP:17067"/>
        <dbReference type="ChEBI" id="CHEBI:15378"/>
        <dbReference type="ChEBI" id="CHEBI:136412"/>
        <dbReference type="ChEBI" id="CHEBI:157695"/>
        <dbReference type="ChEBI" id="CHEBI:167181"/>
        <dbReference type="EC" id="4.2.99.18"/>
    </reaction>
</comment>
<comment type="cofactor">
    <cofactor evidence="1">
        <name>Zn(2+)</name>
        <dbReference type="ChEBI" id="CHEBI:29105"/>
    </cofactor>
    <text evidence="1">Binds 1 zinc ion per subunit.</text>
</comment>
<comment type="similarity">
    <text evidence="1">Belongs to the FPG family.</text>
</comment>
<sequence length="263" mass="29818">MPEGPEIRRAADNLEAAIKGKPLTDVWFAFPQLKTYQSQLIGQHVTHVGTRGKALLTHFSNDLTLYSHNQLYGVWRVVDTGEEPQTTRVLRVKLQTADKTILLYSASDIEMLRPEQLTTHPFLQRVGPDVLDPNLTPEVVKERLLSPRFRNRQFAGLLLDQAFLAGLGNYLRVEILWQVGLTGNHKAKDLNAAQLDALAHALLEIPRFSYATRGQVDENKHHGALFRFKVFHRDGELCERCGGIIEKTTLSSRPFYWCPGCQH</sequence>
<gene>
    <name evidence="1" type="primary">nei</name>
    <name type="ordered locus">SBO_0573</name>
</gene>
<feature type="initiator methionine" description="Removed" evidence="1">
    <location>
        <position position="1"/>
    </location>
</feature>
<feature type="chain" id="PRO_1000067209" description="Endonuclease 8">
    <location>
        <begin position="2"/>
        <end position="263"/>
    </location>
</feature>
<feature type="zinc finger region" description="FPG-type" evidence="1">
    <location>
        <begin position="229"/>
        <end position="263"/>
    </location>
</feature>
<feature type="active site" description="Schiff-base intermediate with DNA" evidence="1">
    <location>
        <position position="2"/>
    </location>
</feature>
<feature type="active site" description="Proton donor" evidence="1">
    <location>
        <position position="3"/>
    </location>
</feature>
<feature type="active site" description="Proton donor; for beta-elimination activity" evidence="1">
    <location>
        <position position="53"/>
    </location>
</feature>
<feature type="active site" description="Proton donor; for delta-elimination activity" evidence="1">
    <location>
        <position position="253"/>
    </location>
</feature>
<feature type="binding site" evidence="1">
    <location>
        <position position="70"/>
    </location>
    <ligand>
        <name>DNA</name>
        <dbReference type="ChEBI" id="CHEBI:16991"/>
    </ligand>
</feature>
<feature type="binding site" evidence="1">
    <location>
        <position position="125"/>
    </location>
    <ligand>
        <name>DNA</name>
        <dbReference type="ChEBI" id="CHEBI:16991"/>
    </ligand>
</feature>
<feature type="binding site" evidence="1">
    <location>
        <position position="169"/>
    </location>
    <ligand>
        <name>DNA</name>
        <dbReference type="ChEBI" id="CHEBI:16991"/>
    </ligand>
</feature>
<accession>Q324J6</accession>
<proteinExistence type="inferred from homology"/>
<protein>
    <recommendedName>
        <fullName evidence="1">Endonuclease 8</fullName>
    </recommendedName>
    <alternativeName>
        <fullName evidence="1">DNA glycosylase/AP lyase Nei</fullName>
        <ecNumber evidence="1">3.2.2.-</ecNumber>
        <ecNumber evidence="1">4.2.99.18</ecNumber>
    </alternativeName>
    <alternativeName>
        <fullName evidence="1">DNA-(apurinic or apyrimidinic site) lyase Nei</fullName>
    </alternativeName>
    <alternativeName>
        <fullName evidence="1">Endonuclease VIII</fullName>
    </alternativeName>
</protein>